<organism>
    <name type="scientific">Legionella pneumophila (strain Corby)</name>
    <dbReference type="NCBI Taxonomy" id="400673"/>
    <lineage>
        <taxon>Bacteria</taxon>
        <taxon>Pseudomonadati</taxon>
        <taxon>Pseudomonadota</taxon>
        <taxon>Gammaproteobacteria</taxon>
        <taxon>Legionellales</taxon>
        <taxon>Legionellaceae</taxon>
        <taxon>Legionella</taxon>
    </lineage>
</organism>
<sequence>MYSLLRPLLFRLDAEKAHSLTLSLLHYLPGFYFRKIAGQPVHAMGLVFPHQVGLAAGLDKNGEHLDALAKLGFSFIELGTVTPKGQAGNPKPRLFRIAEANAIINRMGFNNSGVDVLVENVKRANYKGILGINIGKNKETNLNQAAEDYLYCFRKVYDHASYVTINISSPNTPDLRQLQQGDYFAELLTQLQKEQIKLADQYGRHVPLVVKVSPDETDETLKQMTDIILQYGIEGIIATNTTCSREMVKNLPCSEEQGGLSGRPLMELSTRCLRLLKQYVGNDVTLIGVGGIDSLESAKDKINAGASLLQVYSGLVYKGPELIHDIVSGLNAI</sequence>
<proteinExistence type="inferred from homology"/>
<evidence type="ECO:0000255" key="1">
    <source>
        <dbReference type="HAMAP-Rule" id="MF_00225"/>
    </source>
</evidence>
<name>PYRD_LEGPC</name>
<reference key="1">
    <citation type="submission" date="2006-11" db="EMBL/GenBank/DDBJ databases">
        <title>Identification and characterization of a new conjugation/ type IVA secretion system (trb/tra) of L. pneumophila Corby localized on a mobile genomic island.</title>
        <authorList>
            <person name="Gloeckner G."/>
            <person name="Albert-Weissenberger C."/>
            <person name="Weinmann E."/>
            <person name="Jacobi S."/>
            <person name="Schunder E."/>
            <person name="Steinert M."/>
            <person name="Buchrieser C."/>
            <person name="Hacker J."/>
            <person name="Heuner K."/>
        </authorList>
    </citation>
    <scope>NUCLEOTIDE SEQUENCE [LARGE SCALE GENOMIC DNA]</scope>
    <source>
        <strain>Corby</strain>
    </source>
</reference>
<protein>
    <recommendedName>
        <fullName evidence="1">Dihydroorotate dehydrogenase (quinone)</fullName>
        <ecNumber evidence="1">1.3.5.2</ecNumber>
    </recommendedName>
    <alternativeName>
        <fullName evidence="1">DHOdehase</fullName>
        <shortName evidence="1">DHOD</shortName>
        <shortName evidence="1">DHODase</shortName>
    </alternativeName>
    <alternativeName>
        <fullName evidence="1">Dihydroorotate oxidase</fullName>
    </alternativeName>
</protein>
<accession>A5ICX8</accession>
<comment type="function">
    <text evidence="1">Catalyzes the conversion of dihydroorotate to orotate with quinone as electron acceptor.</text>
</comment>
<comment type="catalytic activity">
    <reaction evidence="1">
        <text>(S)-dihydroorotate + a quinone = orotate + a quinol</text>
        <dbReference type="Rhea" id="RHEA:30187"/>
        <dbReference type="ChEBI" id="CHEBI:24646"/>
        <dbReference type="ChEBI" id="CHEBI:30839"/>
        <dbReference type="ChEBI" id="CHEBI:30864"/>
        <dbReference type="ChEBI" id="CHEBI:132124"/>
        <dbReference type="EC" id="1.3.5.2"/>
    </reaction>
</comment>
<comment type="cofactor">
    <cofactor evidence="1">
        <name>FMN</name>
        <dbReference type="ChEBI" id="CHEBI:58210"/>
    </cofactor>
    <text evidence="1">Binds 1 FMN per subunit.</text>
</comment>
<comment type="pathway">
    <text evidence="1">Pyrimidine metabolism; UMP biosynthesis via de novo pathway; orotate from (S)-dihydroorotate (quinone route): step 1/1.</text>
</comment>
<comment type="subunit">
    <text evidence="1">Monomer.</text>
</comment>
<comment type="subcellular location">
    <subcellularLocation>
        <location evidence="1">Cell membrane</location>
        <topology evidence="1">Peripheral membrane protein</topology>
    </subcellularLocation>
</comment>
<comment type="similarity">
    <text evidence="1">Belongs to the dihydroorotate dehydrogenase family. Type 2 subfamily.</text>
</comment>
<keyword id="KW-1003">Cell membrane</keyword>
<keyword id="KW-0285">Flavoprotein</keyword>
<keyword id="KW-0288">FMN</keyword>
<keyword id="KW-0472">Membrane</keyword>
<keyword id="KW-0560">Oxidoreductase</keyword>
<keyword id="KW-0665">Pyrimidine biosynthesis</keyword>
<dbReference type="EC" id="1.3.5.2" evidence="1"/>
<dbReference type="EMBL" id="CP000675">
    <property type="protein sequence ID" value="ABQ55228.1"/>
    <property type="molecule type" value="Genomic_DNA"/>
</dbReference>
<dbReference type="RefSeq" id="WP_011214079.1">
    <property type="nucleotide sequence ID" value="NZ_JAPMSS010000005.1"/>
</dbReference>
<dbReference type="SMR" id="A5ICX8"/>
<dbReference type="KEGG" id="lpc:LPC_1265"/>
<dbReference type="HOGENOM" id="CLU_013640_2_0_6"/>
<dbReference type="UniPathway" id="UPA00070">
    <property type="reaction ID" value="UER00946"/>
</dbReference>
<dbReference type="GO" id="GO:0005737">
    <property type="term" value="C:cytoplasm"/>
    <property type="evidence" value="ECO:0007669"/>
    <property type="project" value="InterPro"/>
</dbReference>
<dbReference type="GO" id="GO:0005886">
    <property type="term" value="C:plasma membrane"/>
    <property type="evidence" value="ECO:0007669"/>
    <property type="project" value="UniProtKB-SubCell"/>
</dbReference>
<dbReference type="GO" id="GO:0106430">
    <property type="term" value="F:dihydroorotate dehydrogenase (quinone) activity"/>
    <property type="evidence" value="ECO:0007669"/>
    <property type="project" value="UniProtKB-EC"/>
</dbReference>
<dbReference type="GO" id="GO:0006207">
    <property type="term" value="P:'de novo' pyrimidine nucleobase biosynthetic process"/>
    <property type="evidence" value="ECO:0007669"/>
    <property type="project" value="InterPro"/>
</dbReference>
<dbReference type="GO" id="GO:0044205">
    <property type="term" value="P:'de novo' UMP biosynthetic process"/>
    <property type="evidence" value="ECO:0007669"/>
    <property type="project" value="UniProtKB-UniRule"/>
</dbReference>
<dbReference type="CDD" id="cd04738">
    <property type="entry name" value="DHOD_2_like"/>
    <property type="match status" value="1"/>
</dbReference>
<dbReference type="Gene3D" id="3.20.20.70">
    <property type="entry name" value="Aldolase class I"/>
    <property type="match status" value="1"/>
</dbReference>
<dbReference type="HAMAP" id="MF_00225">
    <property type="entry name" value="DHO_dh_type2"/>
    <property type="match status" value="1"/>
</dbReference>
<dbReference type="InterPro" id="IPR013785">
    <property type="entry name" value="Aldolase_TIM"/>
</dbReference>
<dbReference type="InterPro" id="IPR050074">
    <property type="entry name" value="DHO_dehydrogenase"/>
</dbReference>
<dbReference type="InterPro" id="IPR012135">
    <property type="entry name" value="Dihydroorotate_DH_1_2"/>
</dbReference>
<dbReference type="InterPro" id="IPR005719">
    <property type="entry name" value="Dihydroorotate_DH_2"/>
</dbReference>
<dbReference type="InterPro" id="IPR005720">
    <property type="entry name" value="Dihydroorotate_DH_cat"/>
</dbReference>
<dbReference type="InterPro" id="IPR001295">
    <property type="entry name" value="Dihydroorotate_DH_CS"/>
</dbReference>
<dbReference type="NCBIfam" id="NF003644">
    <property type="entry name" value="PRK05286.1-1"/>
    <property type="match status" value="1"/>
</dbReference>
<dbReference type="NCBIfam" id="NF003645">
    <property type="entry name" value="PRK05286.1-2"/>
    <property type="match status" value="1"/>
</dbReference>
<dbReference type="NCBIfam" id="NF003646">
    <property type="entry name" value="PRK05286.1-4"/>
    <property type="match status" value="1"/>
</dbReference>
<dbReference type="NCBIfam" id="NF003652">
    <property type="entry name" value="PRK05286.2-5"/>
    <property type="match status" value="1"/>
</dbReference>
<dbReference type="NCBIfam" id="TIGR01036">
    <property type="entry name" value="pyrD_sub2"/>
    <property type="match status" value="1"/>
</dbReference>
<dbReference type="PANTHER" id="PTHR48109:SF4">
    <property type="entry name" value="DIHYDROOROTATE DEHYDROGENASE (QUINONE), MITOCHONDRIAL"/>
    <property type="match status" value="1"/>
</dbReference>
<dbReference type="PANTHER" id="PTHR48109">
    <property type="entry name" value="DIHYDROOROTATE DEHYDROGENASE (QUINONE), MITOCHONDRIAL-RELATED"/>
    <property type="match status" value="1"/>
</dbReference>
<dbReference type="Pfam" id="PF01180">
    <property type="entry name" value="DHO_dh"/>
    <property type="match status" value="1"/>
</dbReference>
<dbReference type="PIRSF" id="PIRSF000164">
    <property type="entry name" value="DHO_oxidase"/>
    <property type="match status" value="1"/>
</dbReference>
<dbReference type="SUPFAM" id="SSF51395">
    <property type="entry name" value="FMN-linked oxidoreductases"/>
    <property type="match status" value="1"/>
</dbReference>
<dbReference type="PROSITE" id="PS00911">
    <property type="entry name" value="DHODEHASE_1"/>
    <property type="match status" value="1"/>
</dbReference>
<dbReference type="PROSITE" id="PS00912">
    <property type="entry name" value="DHODEHASE_2"/>
    <property type="match status" value="1"/>
</dbReference>
<gene>
    <name evidence="1" type="primary">pyrD</name>
    <name type="ordered locus">LPC_1265</name>
</gene>
<feature type="chain" id="PRO_1000024181" description="Dihydroorotate dehydrogenase (quinone)">
    <location>
        <begin position="1"/>
        <end position="333"/>
    </location>
</feature>
<feature type="active site" description="Nucleophile" evidence="1">
    <location>
        <position position="169"/>
    </location>
</feature>
<feature type="binding site" evidence="1">
    <location>
        <begin position="56"/>
        <end position="60"/>
    </location>
    <ligand>
        <name>FMN</name>
        <dbReference type="ChEBI" id="CHEBI:58210"/>
    </ligand>
</feature>
<feature type="binding site" evidence="1">
    <location>
        <position position="60"/>
    </location>
    <ligand>
        <name>substrate</name>
    </ligand>
</feature>
<feature type="binding site" evidence="1">
    <location>
        <position position="80"/>
    </location>
    <ligand>
        <name>FMN</name>
        <dbReference type="ChEBI" id="CHEBI:58210"/>
    </ligand>
</feature>
<feature type="binding site" evidence="1">
    <location>
        <begin position="105"/>
        <end position="109"/>
    </location>
    <ligand>
        <name>substrate</name>
    </ligand>
</feature>
<feature type="binding site" evidence="1">
    <location>
        <position position="133"/>
    </location>
    <ligand>
        <name>FMN</name>
        <dbReference type="ChEBI" id="CHEBI:58210"/>
    </ligand>
</feature>
<feature type="binding site" evidence="1">
    <location>
        <position position="166"/>
    </location>
    <ligand>
        <name>FMN</name>
        <dbReference type="ChEBI" id="CHEBI:58210"/>
    </ligand>
</feature>
<feature type="binding site" evidence="1">
    <location>
        <position position="166"/>
    </location>
    <ligand>
        <name>substrate</name>
    </ligand>
</feature>
<feature type="binding site" evidence="1">
    <location>
        <position position="171"/>
    </location>
    <ligand>
        <name>substrate</name>
    </ligand>
</feature>
<feature type="binding site" evidence="1">
    <location>
        <position position="211"/>
    </location>
    <ligand>
        <name>FMN</name>
        <dbReference type="ChEBI" id="CHEBI:58210"/>
    </ligand>
</feature>
<feature type="binding site" evidence="1">
    <location>
        <position position="239"/>
    </location>
    <ligand>
        <name>FMN</name>
        <dbReference type="ChEBI" id="CHEBI:58210"/>
    </ligand>
</feature>
<feature type="binding site" evidence="1">
    <location>
        <begin position="240"/>
        <end position="241"/>
    </location>
    <ligand>
        <name>substrate</name>
    </ligand>
</feature>
<feature type="binding site" evidence="1">
    <location>
        <position position="262"/>
    </location>
    <ligand>
        <name>FMN</name>
        <dbReference type="ChEBI" id="CHEBI:58210"/>
    </ligand>
</feature>
<feature type="binding site" evidence="1">
    <location>
        <position position="291"/>
    </location>
    <ligand>
        <name>FMN</name>
        <dbReference type="ChEBI" id="CHEBI:58210"/>
    </ligand>
</feature>
<feature type="binding site" evidence="1">
    <location>
        <begin position="312"/>
        <end position="313"/>
    </location>
    <ligand>
        <name>FMN</name>
        <dbReference type="ChEBI" id="CHEBI:58210"/>
    </ligand>
</feature>